<name>FABZ_GEOMG</name>
<keyword id="KW-0963">Cytoplasm</keyword>
<keyword id="KW-0441">Lipid A biosynthesis</keyword>
<keyword id="KW-0444">Lipid biosynthesis</keyword>
<keyword id="KW-0443">Lipid metabolism</keyword>
<keyword id="KW-0456">Lyase</keyword>
<keyword id="KW-1185">Reference proteome</keyword>
<dbReference type="EC" id="4.2.1.59" evidence="1"/>
<dbReference type="EMBL" id="CP000148">
    <property type="protein sequence ID" value="ABB32579.1"/>
    <property type="molecule type" value="Genomic_DNA"/>
</dbReference>
<dbReference type="RefSeq" id="WP_004513266.1">
    <property type="nucleotide sequence ID" value="NC_007517.1"/>
</dbReference>
<dbReference type="SMR" id="Q39T45"/>
<dbReference type="STRING" id="269799.Gmet_2354"/>
<dbReference type="KEGG" id="gme:Gmet_2354"/>
<dbReference type="eggNOG" id="COG0764">
    <property type="taxonomic scope" value="Bacteria"/>
</dbReference>
<dbReference type="HOGENOM" id="CLU_078912_3_0_7"/>
<dbReference type="Proteomes" id="UP000007073">
    <property type="component" value="Chromosome"/>
</dbReference>
<dbReference type="GO" id="GO:0005737">
    <property type="term" value="C:cytoplasm"/>
    <property type="evidence" value="ECO:0007669"/>
    <property type="project" value="UniProtKB-SubCell"/>
</dbReference>
<dbReference type="GO" id="GO:0016020">
    <property type="term" value="C:membrane"/>
    <property type="evidence" value="ECO:0007669"/>
    <property type="project" value="GOC"/>
</dbReference>
<dbReference type="GO" id="GO:0019171">
    <property type="term" value="F:(3R)-hydroxyacyl-[acyl-carrier-protein] dehydratase activity"/>
    <property type="evidence" value="ECO:0007669"/>
    <property type="project" value="UniProtKB-EC"/>
</dbReference>
<dbReference type="GO" id="GO:0006633">
    <property type="term" value="P:fatty acid biosynthetic process"/>
    <property type="evidence" value="ECO:0007669"/>
    <property type="project" value="UniProtKB-UniRule"/>
</dbReference>
<dbReference type="GO" id="GO:0009245">
    <property type="term" value="P:lipid A biosynthetic process"/>
    <property type="evidence" value="ECO:0007669"/>
    <property type="project" value="UniProtKB-UniRule"/>
</dbReference>
<dbReference type="CDD" id="cd01288">
    <property type="entry name" value="FabZ"/>
    <property type="match status" value="1"/>
</dbReference>
<dbReference type="FunFam" id="3.10.129.10:FF:000001">
    <property type="entry name" value="3-hydroxyacyl-[acyl-carrier-protein] dehydratase FabZ"/>
    <property type="match status" value="1"/>
</dbReference>
<dbReference type="Gene3D" id="3.10.129.10">
    <property type="entry name" value="Hotdog Thioesterase"/>
    <property type="match status" value="1"/>
</dbReference>
<dbReference type="HAMAP" id="MF_00406">
    <property type="entry name" value="FabZ"/>
    <property type="match status" value="1"/>
</dbReference>
<dbReference type="InterPro" id="IPR013114">
    <property type="entry name" value="FabA_FabZ"/>
</dbReference>
<dbReference type="InterPro" id="IPR010084">
    <property type="entry name" value="FabZ"/>
</dbReference>
<dbReference type="InterPro" id="IPR029069">
    <property type="entry name" value="HotDog_dom_sf"/>
</dbReference>
<dbReference type="NCBIfam" id="TIGR01750">
    <property type="entry name" value="fabZ"/>
    <property type="match status" value="1"/>
</dbReference>
<dbReference type="NCBIfam" id="NF000582">
    <property type="entry name" value="PRK00006.1"/>
    <property type="match status" value="1"/>
</dbReference>
<dbReference type="PANTHER" id="PTHR30272">
    <property type="entry name" value="3-HYDROXYACYL-[ACYL-CARRIER-PROTEIN] DEHYDRATASE"/>
    <property type="match status" value="1"/>
</dbReference>
<dbReference type="PANTHER" id="PTHR30272:SF1">
    <property type="entry name" value="3-HYDROXYACYL-[ACYL-CARRIER-PROTEIN] DEHYDRATASE"/>
    <property type="match status" value="1"/>
</dbReference>
<dbReference type="Pfam" id="PF07977">
    <property type="entry name" value="FabA"/>
    <property type="match status" value="1"/>
</dbReference>
<dbReference type="SUPFAM" id="SSF54637">
    <property type="entry name" value="Thioesterase/thiol ester dehydrase-isomerase"/>
    <property type="match status" value="1"/>
</dbReference>
<sequence>METVFDINEIMKILPHRYPFLLVDRIVEHVPGERIVGIKNVTINEPFFQGHFPGHPIMPGVLIVEAMAQVGGILAYMASDDEVRNKVCYFASIDNVKFRKPVLPGDQLRIEVAATGCKRGIWCFSAKAIVKGKVTTQAELKATFADKDRL</sequence>
<reference key="1">
    <citation type="journal article" date="2009" name="BMC Microbiol.">
        <title>The genome sequence of Geobacter metallireducens: features of metabolism, physiology and regulation common and dissimilar to Geobacter sulfurreducens.</title>
        <authorList>
            <person name="Aklujkar M."/>
            <person name="Krushkal J."/>
            <person name="DiBartolo G."/>
            <person name="Lapidus A."/>
            <person name="Land M.L."/>
            <person name="Lovley D.R."/>
        </authorList>
    </citation>
    <scope>NUCLEOTIDE SEQUENCE [LARGE SCALE GENOMIC DNA]</scope>
    <source>
        <strain>ATCC 53774 / DSM 7210 / GS-15</strain>
    </source>
</reference>
<evidence type="ECO:0000255" key="1">
    <source>
        <dbReference type="HAMAP-Rule" id="MF_00406"/>
    </source>
</evidence>
<proteinExistence type="inferred from homology"/>
<protein>
    <recommendedName>
        <fullName evidence="1">3-hydroxyacyl-[acyl-carrier-protein] dehydratase FabZ</fullName>
        <ecNumber evidence="1">4.2.1.59</ecNumber>
    </recommendedName>
    <alternativeName>
        <fullName evidence="1">(3R)-hydroxymyristoyl-[acyl-carrier-protein] dehydratase</fullName>
        <shortName evidence="1">(3R)-hydroxymyristoyl-ACP dehydrase</shortName>
    </alternativeName>
    <alternativeName>
        <fullName evidence="1">Beta-hydroxyacyl-ACP dehydratase</fullName>
    </alternativeName>
</protein>
<comment type="function">
    <text evidence="1">Involved in unsaturated fatty acids biosynthesis. Catalyzes the dehydration of short chain beta-hydroxyacyl-ACPs and long chain saturated and unsaturated beta-hydroxyacyl-ACPs.</text>
</comment>
<comment type="catalytic activity">
    <reaction evidence="1">
        <text>a (3R)-hydroxyacyl-[ACP] = a (2E)-enoyl-[ACP] + H2O</text>
        <dbReference type="Rhea" id="RHEA:13097"/>
        <dbReference type="Rhea" id="RHEA-COMP:9925"/>
        <dbReference type="Rhea" id="RHEA-COMP:9945"/>
        <dbReference type="ChEBI" id="CHEBI:15377"/>
        <dbReference type="ChEBI" id="CHEBI:78784"/>
        <dbReference type="ChEBI" id="CHEBI:78827"/>
        <dbReference type="EC" id="4.2.1.59"/>
    </reaction>
</comment>
<comment type="subcellular location">
    <subcellularLocation>
        <location evidence="1">Cytoplasm</location>
    </subcellularLocation>
</comment>
<comment type="similarity">
    <text evidence="1">Belongs to the thioester dehydratase family. FabZ subfamily.</text>
</comment>
<organism>
    <name type="scientific">Geobacter metallireducens (strain ATCC 53774 / DSM 7210 / GS-15)</name>
    <dbReference type="NCBI Taxonomy" id="269799"/>
    <lineage>
        <taxon>Bacteria</taxon>
        <taxon>Pseudomonadati</taxon>
        <taxon>Thermodesulfobacteriota</taxon>
        <taxon>Desulfuromonadia</taxon>
        <taxon>Geobacterales</taxon>
        <taxon>Geobacteraceae</taxon>
        <taxon>Geobacter</taxon>
    </lineage>
</organism>
<feature type="chain" id="PRO_0000230814" description="3-hydroxyacyl-[acyl-carrier-protein] dehydratase FabZ">
    <location>
        <begin position="1"/>
        <end position="150"/>
    </location>
</feature>
<feature type="active site" evidence="1">
    <location>
        <position position="51"/>
    </location>
</feature>
<accession>Q39T45</accession>
<gene>
    <name evidence="1" type="primary">fabZ</name>
    <name type="ordered locus">Gmet_2354</name>
</gene>